<feature type="chain" id="PRO_0000261795" description="Large ribosomal subunit protein uL13">
    <location>
        <begin position="1"/>
        <end position="142"/>
    </location>
</feature>
<organism>
    <name type="scientific">Shewanella oneidensis (strain ATCC 700550 / JCM 31522 / CIP 106686 / LMG 19005 / NCIMB 14063 / MR-1)</name>
    <dbReference type="NCBI Taxonomy" id="211586"/>
    <lineage>
        <taxon>Bacteria</taxon>
        <taxon>Pseudomonadati</taxon>
        <taxon>Pseudomonadota</taxon>
        <taxon>Gammaproteobacteria</taxon>
        <taxon>Alteromonadales</taxon>
        <taxon>Shewanellaceae</taxon>
        <taxon>Shewanella</taxon>
    </lineage>
</organism>
<comment type="function">
    <text evidence="1">This protein is one of the early assembly proteins of the 50S ribosomal subunit, although it is not seen to bind rRNA by itself. It is important during the early stages of 50S assembly.</text>
</comment>
<comment type="subunit">
    <text evidence="1">Part of the 50S ribosomal subunit.</text>
</comment>
<comment type="similarity">
    <text evidence="1">Belongs to the universal ribosomal protein uL13 family.</text>
</comment>
<evidence type="ECO:0000255" key="1">
    <source>
        <dbReference type="HAMAP-Rule" id="MF_01366"/>
    </source>
</evidence>
<evidence type="ECO:0000305" key="2"/>
<keyword id="KW-1185">Reference proteome</keyword>
<keyword id="KW-0687">Ribonucleoprotein</keyword>
<keyword id="KW-0689">Ribosomal protein</keyword>
<dbReference type="EMBL" id="AE014299">
    <property type="protein sequence ID" value="AAN56915.1"/>
    <property type="molecule type" value="Genomic_DNA"/>
</dbReference>
<dbReference type="RefSeq" id="NP_719471.1">
    <property type="nucleotide sequence ID" value="NC_004347.2"/>
</dbReference>
<dbReference type="RefSeq" id="WP_011073682.1">
    <property type="nucleotide sequence ID" value="NZ_CP053946.1"/>
</dbReference>
<dbReference type="SMR" id="Q8EAG2"/>
<dbReference type="STRING" id="211586.SO_3940"/>
<dbReference type="PaxDb" id="211586-SO_3940"/>
<dbReference type="GeneID" id="94726682"/>
<dbReference type="KEGG" id="son:SO_3940"/>
<dbReference type="PATRIC" id="fig|211586.12.peg.3823"/>
<dbReference type="eggNOG" id="COG0102">
    <property type="taxonomic scope" value="Bacteria"/>
</dbReference>
<dbReference type="HOGENOM" id="CLU_082184_2_2_6"/>
<dbReference type="OrthoDB" id="9801330at2"/>
<dbReference type="PhylomeDB" id="Q8EAG2"/>
<dbReference type="BioCyc" id="SONE211586:G1GMP-3657-MONOMER"/>
<dbReference type="Proteomes" id="UP000008186">
    <property type="component" value="Chromosome"/>
</dbReference>
<dbReference type="GO" id="GO:0022625">
    <property type="term" value="C:cytosolic large ribosomal subunit"/>
    <property type="evidence" value="ECO:0000318"/>
    <property type="project" value="GO_Central"/>
</dbReference>
<dbReference type="GO" id="GO:0005840">
    <property type="term" value="C:ribosome"/>
    <property type="evidence" value="ECO:0000318"/>
    <property type="project" value="GO_Central"/>
</dbReference>
<dbReference type="GO" id="GO:0003729">
    <property type="term" value="F:mRNA binding"/>
    <property type="evidence" value="ECO:0000318"/>
    <property type="project" value="GO_Central"/>
</dbReference>
<dbReference type="GO" id="GO:0003735">
    <property type="term" value="F:structural constituent of ribosome"/>
    <property type="evidence" value="ECO:0000318"/>
    <property type="project" value="GO_Central"/>
</dbReference>
<dbReference type="GO" id="GO:0017148">
    <property type="term" value="P:negative regulation of translation"/>
    <property type="evidence" value="ECO:0000318"/>
    <property type="project" value="GO_Central"/>
</dbReference>
<dbReference type="GO" id="GO:0006412">
    <property type="term" value="P:translation"/>
    <property type="evidence" value="ECO:0007669"/>
    <property type="project" value="UniProtKB-UniRule"/>
</dbReference>
<dbReference type="CDD" id="cd00392">
    <property type="entry name" value="Ribosomal_L13"/>
    <property type="match status" value="1"/>
</dbReference>
<dbReference type="FunFam" id="3.90.1180.10:FF:000001">
    <property type="entry name" value="50S ribosomal protein L13"/>
    <property type="match status" value="1"/>
</dbReference>
<dbReference type="Gene3D" id="3.90.1180.10">
    <property type="entry name" value="Ribosomal protein L13"/>
    <property type="match status" value="1"/>
</dbReference>
<dbReference type="HAMAP" id="MF_01366">
    <property type="entry name" value="Ribosomal_uL13"/>
    <property type="match status" value="1"/>
</dbReference>
<dbReference type="InterPro" id="IPR005822">
    <property type="entry name" value="Ribosomal_uL13"/>
</dbReference>
<dbReference type="InterPro" id="IPR005823">
    <property type="entry name" value="Ribosomal_uL13_bac-type"/>
</dbReference>
<dbReference type="InterPro" id="IPR023563">
    <property type="entry name" value="Ribosomal_uL13_CS"/>
</dbReference>
<dbReference type="InterPro" id="IPR036899">
    <property type="entry name" value="Ribosomal_uL13_sf"/>
</dbReference>
<dbReference type="NCBIfam" id="TIGR01066">
    <property type="entry name" value="rplM_bact"/>
    <property type="match status" value="1"/>
</dbReference>
<dbReference type="PANTHER" id="PTHR11545:SF2">
    <property type="entry name" value="LARGE RIBOSOMAL SUBUNIT PROTEIN UL13M"/>
    <property type="match status" value="1"/>
</dbReference>
<dbReference type="PANTHER" id="PTHR11545">
    <property type="entry name" value="RIBOSOMAL PROTEIN L13"/>
    <property type="match status" value="1"/>
</dbReference>
<dbReference type="Pfam" id="PF00572">
    <property type="entry name" value="Ribosomal_L13"/>
    <property type="match status" value="1"/>
</dbReference>
<dbReference type="PIRSF" id="PIRSF002181">
    <property type="entry name" value="Ribosomal_L13"/>
    <property type="match status" value="1"/>
</dbReference>
<dbReference type="SUPFAM" id="SSF52161">
    <property type="entry name" value="Ribosomal protein L13"/>
    <property type="match status" value="1"/>
</dbReference>
<dbReference type="PROSITE" id="PS00783">
    <property type="entry name" value="RIBOSOMAL_L13"/>
    <property type="match status" value="1"/>
</dbReference>
<proteinExistence type="inferred from homology"/>
<sequence length="142" mass="15743">MKTFTATPETVTRDWFVVDADGKTLGRIATEIALRLRGKHKPEYTPHVDTGDYIIVINAEKVTVTGNKAQGKTYYSHSGFPGGIKQISFEKLQAHKPEMIIEKAVKGMLPKGPLGRAMFRKLKVYAGAEHNHAAQQPQVLDI</sequence>
<name>RL13_SHEON</name>
<accession>Q8EAG2</accession>
<gene>
    <name evidence="1" type="primary">rplM</name>
    <name type="ordered locus">SO_3940</name>
</gene>
<protein>
    <recommendedName>
        <fullName evidence="1">Large ribosomal subunit protein uL13</fullName>
    </recommendedName>
    <alternativeName>
        <fullName evidence="2">50S ribosomal protein L13</fullName>
    </alternativeName>
</protein>
<reference key="1">
    <citation type="journal article" date="2002" name="Nat. Biotechnol.">
        <title>Genome sequence of the dissimilatory metal ion-reducing bacterium Shewanella oneidensis.</title>
        <authorList>
            <person name="Heidelberg J.F."/>
            <person name="Paulsen I.T."/>
            <person name="Nelson K.E."/>
            <person name="Gaidos E.J."/>
            <person name="Nelson W.C."/>
            <person name="Read T.D."/>
            <person name="Eisen J.A."/>
            <person name="Seshadri R."/>
            <person name="Ward N.L."/>
            <person name="Methe B.A."/>
            <person name="Clayton R.A."/>
            <person name="Meyer T."/>
            <person name="Tsapin A."/>
            <person name="Scott J."/>
            <person name="Beanan M.J."/>
            <person name="Brinkac L.M."/>
            <person name="Daugherty S.C."/>
            <person name="DeBoy R.T."/>
            <person name="Dodson R.J."/>
            <person name="Durkin A.S."/>
            <person name="Haft D.H."/>
            <person name="Kolonay J.F."/>
            <person name="Madupu R."/>
            <person name="Peterson J.D."/>
            <person name="Umayam L.A."/>
            <person name="White O."/>
            <person name="Wolf A.M."/>
            <person name="Vamathevan J.J."/>
            <person name="Weidman J.F."/>
            <person name="Impraim M."/>
            <person name="Lee K."/>
            <person name="Berry K.J."/>
            <person name="Lee C."/>
            <person name="Mueller J."/>
            <person name="Khouri H.M."/>
            <person name="Gill J."/>
            <person name="Utterback T.R."/>
            <person name="McDonald L.A."/>
            <person name="Feldblyum T.V."/>
            <person name="Smith H.O."/>
            <person name="Venter J.C."/>
            <person name="Nealson K.H."/>
            <person name="Fraser C.M."/>
        </authorList>
    </citation>
    <scope>NUCLEOTIDE SEQUENCE [LARGE SCALE GENOMIC DNA]</scope>
    <source>
        <strain>ATCC 700550 / JCM 31522 / CIP 106686 / LMG 19005 / NCIMB 14063 / MR-1</strain>
    </source>
</reference>